<dbReference type="EMBL" id="AE014134">
    <property type="protein sequence ID" value="AAF53690.1"/>
    <property type="molecule type" value="Genomic_DNA"/>
</dbReference>
<dbReference type="EMBL" id="AE014134">
    <property type="protein sequence ID" value="AAN11011.2"/>
    <property type="molecule type" value="Genomic_DNA"/>
</dbReference>
<dbReference type="EMBL" id="AY118443">
    <property type="protein sequence ID" value="AAM48472.1"/>
    <property type="molecule type" value="mRNA"/>
</dbReference>
<dbReference type="RefSeq" id="NP_609895.2">
    <property type="nucleotide sequence ID" value="NM_136051.2"/>
</dbReference>
<dbReference type="RefSeq" id="NP_724124.1">
    <property type="nucleotide sequence ID" value="NM_165261.2"/>
</dbReference>
<dbReference type="SMR" id="Q8INX3"/>
<dbReference type="BioGRID" id="61116">
    <property type="interactions" value="3"/>
</dbReference>
<dbReference type="FunCoup" id="Q8INX3">
    <property type="interactions" value="1003"/>
</dbReference>
<dbReference type="IntAct" id="Q8INX3">
    <property type="interactions" value="3"/>
</dbReference>
<dbReference type="STRING" id="7227.FBpp0271702"/>
<dbReference type="GlyGen" id="Q8INX3">
    <property type="glycosylation" value="2 sites"/>
</dbReference>
<dbReference type="PaxDb" id="7227-FBpp0271702"/>
<dbReference type="DNASU" id="35122"/>
<dbReference type="EnsemblMetazoa" id="FBtr0081095">
    <property type="protein sequence ID" value="FBpp0080645"/>
    <property type="gene ID" value="FBgn0032698"/>
</dbReference>
<dbReference type="EnsemblMetazoa" id="FBtr0273194">
    <property type="protein sequence ID" value="FBpp0271702"/>
    <property type="gene ID" value="FBgn0032698"/>
</dbReference>
<dbReference type="GeneID" id="35122"/>
<dbReference type="KEGG" id="dme:Dmel_CG10336"/>
<dbReference type="UCSC" id="CG10336-RA">
    <property type="organism name" value="d. melanogaster"/>
</dbReference>
<dbReference type="AGR" id="FB:FBgn0032698"/>
<dbReference type="FlyBase" id="FBgn0032698">
    <property type="gene designation" value="CG10336"/>
</dbReference>
<dbReference type="VEuPathDB" id="VectorBase:FBgn0032698"/>
<dbReference type="eggNOG" id="KOG3004">
    <property type="taxonomic scope" value="Eukaryota"/>
</dbReference>
<dbReference type="GeneTree" id="ENSGT00390000005764"/>
<dbReference type="HOGENOM" id="CLU_947534_0_0_1"/>
<dbReference type="InParanoid" id="Q8INX3"/>
<dbReference type="OMA" id="QVHMTRY"/>
<dbReference type="OrthoDB" id="437078at2759"/>
<dbReference type="PhylomeDB" id="Q8INX3"/>
<dbReference type="Reactome" id="R-DME-5693607">
    <property type="pathway name" value="Processing of DNA double-strand break ends"/>
</dbReference>
<dbReference type="BioGRID-ORCS" id="35122">
    <property type="hits" value="0 hits in 1 CRISPR screen"/>
</dbReference>
<dbReference type="GenomeRNAi" id="35122"/>
<dbReference type="PRO" id="PR:Q8INX3"/>
<dbReference type="Proteomes" id="UP000000803">
    <property type="component" value="Chromosome 2L"/>
</dbReference>
<dbReference type="Bgee" id="FBgn0032698">
    <property type="expression patterns" value="Expressed in secondary oocyte and 32 other cell types or tissues"/>
</dbReference>
<dbReference type="ExpressionAtlas" id="Q8INX3">
    <property type="expression patterns" value="baseline and differential"/>
</dbReference>
<dbReference type="GO" id="GO:0000785">
    <property type="term" value="C:chromatin"/>
    <property type="evidence" value="ECO:0000250"/>
    <property type="project" value="UniProtKB"/>
</dbReference>
<dbReference type="GO" id="GO:0005737">
    <property type="term" value="C:cytoplasm"/>
    <property type="evidence" value="ECO:0007669"/>
    <property type="project" value="UniProtKB-SubCell"/>
</dbReference>
<dbReference type="GO" id="GO:0005634">
    <property type="term" value="C:nucleus"/>
    <property type="evidence" value="ECO:0000250"/>
    <property type="project" value="UniProtKB"/>
</dbReference>
<dbReference type="GO" id="GO:0031298">
    <property type="term" value="C:replication fork protection complex"/>
    <property type="evidence" value="ECO:0000318"/>
    <property type="project" value="GO_Central"/>
</dbReference>
<dbReference type="GO" id="GO:0003677">
    <property type="term" value="F:DNA binding"/>
    <property type="evidence" value="ECO:0000318"/>
    <property type="project" value="GO_Central"/>
</dbReference>
<dbReference type="GO" id="GO:0044770">
    <property type="term" value="P:cell cycle phase transition"/>
    <property type="evidence" value="ECO:0000250"/>
    <property type="project" value="BHF-UCL"/>
</dbReference>
<dbReference type="GO" id="GO:0051301">
    <property type="term" value="P:cell division"/>
    <property type="evidence" value="ECO:0007669"/>
    <property type="project" value="UniProtKB-KW"/>
</dbReference>
<dbReference type="GO" id="GO:0000076">
    <property type="term" value="P:DNA replication checkpoint signaling"/>
    <property type="evidence" value="ECO:0000250"/>
    <property type="project" value="UniProtKB"/>
</dbReference>
<dbReference type="GO" id="GO:0031573">
    <property type="term" value="P:mitotic intra-S DNA damage checkpoint signaling"/>
    <property type="evidence" value="ECO:0000250"/>
    <property type="project" value="UniProtKB"/>
</dbReference>
<dbReference type="GO" id="GO:0008284">
    <property type="term" value="P:positive regulation of cell population proliferation"/>
    <property type="evidence" value="ECO:0000250"/>
    <property type="project" value="UniProtKB"/>
</dbReference>
<dbReference type="GO" id="GO:0043111">
    <property type="term" value="P:replication fork arrest"/>
    <property type="evidence" value="ECO:0000318"/>
    <property type="project" value="GO_Central"/>
</dbReference>
<dbReference type="GO" id="GO:0031297">
    <property type="term" value="P:replication fork processing"/>
    <property type="evidence" value="ECO:0007669"/>
    <property type="project" value="InterPro"/>
</dbReference>
<dbReference type="InterPro" id="IPR012923">
    <property type="entry name" value="Csm3"/>
</dbReference>
<dbReference type="InterPro" id="IPR040038">
    <property type="entry name" value="TIPIN/Csm3/Swi3"/>
</dbReference>
<dbReference type="PANTHER" id="PTHR13220">
    <property type="entry name" value="TIMELESS INTERACTING-RELATED"/>
    <property type="match status" value="1"/>
</dbReference>
<dbReference type="PANTHER" id="PTHR13220:SF11">
    <property type="entry name" value="TIMELESS-INTERACTING PROTEIN"/>
    <property type="match status" value="1"/>
</dbReference>
<dbReference type="Pfam" id="PF07962">
    <property type="entry name" value="Swi3"/>
    <property type="match status" value="1"/>
</dbReference>
<evidence type="ECO:0000250" key="1"/>
<evidence type="ECO:0000256" key="2">
    <source>
        <dbReference type="SAM" id="MobiDB-lite"/>
    </source>
</evidence>
<evidence type="ECO:0000269" key="3">
    <source>
    </source>
</evidence>
<evidence type="ECO:0000305" key="4"/>
<gene>
    <name type="ORF">CG10336</name>
</gene>
<comment type="function">
    <text evidence="1">Required for normal progression of S-phase. Important for cell survival after DNA damage or replication stress (By similarity).</text>
</comment>
<comment type="subcellular location">
    <subcellularLocation>
        <location evidence="1">Cytoplasm</location>
    </subcellularLocation>
    <subcellularLocation>
        <location evidence="1">Nucleus</location>
    </subcellularLocation>
</comment>
<comment type="induction">
    <text evidence="3">By E2f.</text>
</comment>
<comment type="similarity">
    <text evidence="4">Belongs to the CSM3 family.</text>
</comment>
<reference key="1">
    <citation type="journal article" date="2000" name="Science">
        <title>The genome sequence of Drosophila melanogaster.</title>
        <authorList>
            <person name="Adams M.D."/>
            <person name="Celniker S.E."/>
            <person name="Holt R.A."/>
            <person name="Evans C.A."/>
            <person name="Gocayne J.D."/>
            <person name="Amanatides P.G."/>
            <person name="Scherer S.E."/>
            <person name="Li P.W."/>
            <person name="Hoskins R.A."/>
            <person name="Galle R.F."/>
            <person name="George R.A."/>
            <person name="Lewis S.E."/>
            <person name="Richards S."/>
            <person name="Ashburner M."/>
            <person name="Henderson S.N."/>
            <person name="Sutton G.G."/>
            <person name="Wortman J.R."/>
            <person name="Yandell M.D."/>
            <person name="Zhang Q."/>
            <person name="Chen L.X."/>
            <person name="Brandon R.C."/>
            <person name="Rogers Y.-H.C."/>
            <person name="Blazej R.G."/>
            <person name="Champe M."/>
            <person name="Pfeiffer B.D."/>
            <person name="Wan K.H."/>
            <person name="Doyle C."/>
            <person name="Baxter E.G."/>
            <person name="Helt G."/>
            <person name="Nelson C.R."/>
            <person name="Miklos G.L.G."/>
            <person name="Abril J.F."/>
            <person name="Agbayani A."/>
            <person name="An H.-J."/>
            <person name="Andrews-Pfannkoch C."/>
            <person name="Baldwin D."/>
            <person name="Ballew R.M."/>
            <person name="Basu A."/>
            <person name="Baxendale J."/>
            <person name="Bayraktaroglu L."/>
            <person name="Beasley E.M."/>
            <person name="Beeson K.Y."/>
            <person name="Benos P.V."/>
            <person name="Berman B.P."/>
            <person name="Bhandari D."/>
            <person name="Bolshakov S."/>
            <person name="Borkova D."/>
            <person name="Botchan M.R."/>
            <person name="Bouck J."/>
            <person name="Brokstein P."/>
            <person name="Brottier P."/>
            <person name="Burtis K.C."/>
            <person name="Busam D.A."/>
            <person name="Butler H."/>
            <person name="Cadieu E."/>
            <person name="Center A."/>
            <person name="Chandra I."/>
            <person name="Cherry J.M."/>
            <person name="Cawley S."/>
            <person name="Dahlke C."/>
            <person name="Davenport L.B."/>
            <person name="Davies P."/>
            <person name="de Pablos B."/>
            <person name="Delcher A."/>
            <person name="Deng Z."/>
            <person name="Mays A.D."/>
            <person name="Dew I."/>
            <person name="Dietz S.M."/>
            <person name="Dodson K."/>
            <person name="Doup L.E."/>
            <person name="Downes M."/>
            <person name="Dugan-Rocha S."/>
            <person name="Dunkov B.C."/>
            <person name="Dunn P."/>
            <person name="Durbin K.J."/>
            <person name="Evangelista C.C."/>
            <person name="Ferraz C."/>
            <person name="Ferriera S."/>
            <person name="Fleischmann W."/>
            <person name="Fosler C."/>
            <person name="Gabrielian A.E."/>
            <person name="Garg N.S."/>
            <person name="Gelbart W.M."/>
            <person name="Glasser K."/>
            <person name="Glodek A."/>
            <person name="Gong F."/>
            <person name="Gorrell J.H."/>
            <person name="Gu Z."/>
            <person name="Guan P."/>
            <person name="Harris M."/>
            <person name="Harris N.L."/>
            <person name="Harvey D.A."/>
            <person name="Heiman T.J."/>
            <person name="Hernandez J.R."/>
            <person name="Houck J."/>
            <person name="Hostin D."/>
            <person name="Houston K.A."/>
            <person name="Howland T.J."/>
            <person name="Wei M.-H."/>
            <person name="Ibegwam C."/>
            <person name="Jalali M."/>
            <person name="Kalush F."/>
            <person name="Karpen G.H."/>
            <person name="Ke Z."/>
            <person name="Kennison J.A."/>
            <person name="Ketchum K.A."/>
            <person name="Kimmel B.E."/>
            <person name="Kodira C.D."/>
            <person name="Kraft C.L."/>
            <person name="Kravitz S."/>
            <person name="Kulp D."/>
            <person name="Lai Z."/>
            <person name="Lasko P."/>
            <person name="Lei Y."/>
            <person name="Levitsky A.A."/>
            <person name="Li J.H."/>
            <person name="Li Z."/>
            <person name="Liang Y."/>
            <person name="Lin X."/>
            <person name="Liu X."/>
            <person name="Mattei B."/>
            <person name="McIntosh T.C."/>
            <person name="McLeod M.P."/>
            <person name="McPherson D."/>
            <person name="Merkulov G."/>
            <person name="Milshina N.V."/>
            <person name="Mobarry C."/>
            <person name="Morris J."/>
            <person name="Moshrefi A."/>
            <person name="Mount S.M."/>
            <person name="Moy M."/>
            <person name="Murphy B."/>
            <person name="Murphy L."/>
            <person name="Muzny D.M."/>
            <person name="Nelson D.L."/>
            <person name="Nelson D.R."/>
            <person name="Nelson K.A."/>
            <person name="Nixon K."/>
            <person name="Nusskern D.R."/>
            <person name="Pacleb J.M."/>
            <person name="Palazzolo M."/>
            <person name="Pittman G.S."/>
            <person name="Pan S."/>
            <person name="Pollard J."/>
            <person name="Puri V."/>
            <person name="Reese M.G."/>
            <person name="Reinert K."/>
            <person name="Remington K."/>
            <person name="Saunders R.D.C."/>
            <person name="Scheeler F."/>
            <person name="Shen H."/>
            <person name="Shue B.C."/>
            <person name="Siden-Kiamos I."/>
            <person name="Simpson M."/>
            <person name="Skupski M.P."/>
            <person name="Smith T.J."/>
            <person name="Spier E."/>
            <person name="Spradling A.C."/>
            <person name="Stapleton M."/>
            <person name="Strong R."/>
            <person name="Sun E."/>
            <person name="Svirskas R."/>
            <person name="Tector C."/>
            <person name="Turner R."/>
            <person name="Venter E."/>
            <person name="Wang A.H."/>
            <person name="Wang X."/>
            <person name="Wang Z.-Y."/>
            <person name="Wassarman D.A."/>
            <person name="Weinstock G.M."/>
            <person name="Weissenbach J."/>
            <person name="Williams S.M."/>
            <person name="Woodage T."/>
            <person name="Worley K.C."/>
            <person name="Wu D."/>
            <person name="Yang S."/>
            <person name="Yao Q.A."/>
            <person name="Ye J."/>
            <person name="Yeh R.-F."/>
            <person name="Zaveri J.S."/>
            <person name="Zhan M."/>
            <person name="Zhang G."/>
            <person name="Zhao Q."/>
            <person name="Zheng L."/>
            <person name="Zheng X.H."/>
            <person name="Zhong F.N."/>
            <person name="Zhong W."/>
            <person name="Zhou X."/>
            <person name="Zhu S.C."/>
            <person name="Zhu X."/>
            <person name="Smith H.O."/>
            <person name="Gibbs R.A."/>
            <person name="Myers E.W."/>
            <person name="Rubin G.M."/>
            <person name="Venter J.C."/>
        </authorList>
    </citation>
    <scope>NUCLEOTIDE SEQUENCE [LARGE SCALE GENOMIC DNA]</scope>
    <source>
        <strain>Berkeley</strain>
    </source>
</reference>
<reference key="2">
    <citation type="journal article" date="2002" name="Genome Biol.">
        <title>Annotation of the Drosophila melanogaster euchromatic genome: a systematic review.</title>
        <authorList>
            <person name="Misra S."/>
            <person name="Crosby M.A."/>
            <person name="Mungall C.J."/>
            <person name="Matthews B.B."/>
            <person name="Campbell K.S."/>
            <person name="Hradecky P."/>
            <person name="Huang Y."/>
            <person name="Kaminker J.S."/>
            <person name="Millburn G.H."/>
            <person name="Prochnik S.E."/>
            <person name="Smith C.D."/>
            <person name="Tupy J.L."/>
            <person name="Whitfield E.J."/>
            <person name="Bayraktaroglu L."/>
            <person name="Berman B.P."/>
            <person name="Bettencourt B.R."/>
            <person name="Celniker S.E."/>
            <person name="de Grey A.D.N.J."/>
            <person name="Drysdale R.A."/>
            <person name="Harris N.L."/>
            <person name="Richter J."/>
            <person name="Russo S."/>
            <person name="Schroeder A.J."/>
            <person name="Shu S.Q."/>
            <person name="Stapleton M."/>
            <person name="Yamada C."/>
            <person name="Ashburner M."/>
            <person name="Gelbart W.M."/>
            <person name="Rubin G.M."/>
            <person name="Lewis S.E."/>
        </authorList>
    </citation>
    <scope>GENOME REANNOTATION</scope>
    <source>
        <strain>Berkeley</strain>
    </source>
</reference>
<reference key="3">
    <citation type="journal article" date="2002" name="Genome Biol.">
        <title>A Drosophila full-length cDNA resource.</title>
        <authorList>
            <person name="Stapleton M."/>
            <person name="Carlson J.W."/>
            <person name="Brokstein P."/>
            <person name="Yu C."/>
            <person name="Champe M."/>
            <person name="George R.A."/>
            <person name="Guarin H."/>
            <person name="Kronmiller B."/>
            <person name="Pacleb J.M."/>
            <person name="Park S."/>
            <person name="Wan K.H."/>
            <person name="Rubin G.M."/>
            <person name="Celniker S.E."/>
        </authorList>
    </citation>
    <scope>NUCLEOTIDE SEQUENCE [LARGE SCALE MRNA]</scope>
    <source>
        <strain>Berkeley</strain>
        <tissue>Embryo</tissue>
    </source>
</reference>
<reference key="4">
    <citation type="journal article" date="2003" name="Genes Dev.">
        <title>Cell cycle-dependent and cell cycle-independent control of transcription by the Drosophila E2F/RB pathway.</title>
        <authorList>
            <person name="Dimova D.K."/>
            <person name="Stevaux O."/>
            <person name="Frolov M.V."/>
            <person name="Dyson N.J."/>
        </authorList>
    </citation>
    <scope>INDUCTION</scope>
</reference>
<accession>Q8INX3</accession>
<accession>Q9VJ65</accession>
<protein>
    <recommendedName>
        <fullName>Protein TIPIN homolog</fullName>
    </recommendedName>
    <alternativeName>
        <fullName>CSM3 homolog</fullName>
    </alternativeName>
</protein>
<organism>
    <name type="scientific">Drosophila melanogaster</name>
    <name type="common">Fruit fly</name>
    <dbReference type="NCBI Taxonomy" id="7227"/>
    <lineage>
        <taxon>Eukaryota</taxon>
        <taxon>Metazoa</taxon>
        <taxon>Ecdysozoa</taxon>
        <taxon>Arthropoda</taxon>
        <taxon>Hexapoda</taxon>
        <taxon>Insecta</taxon>
        <taxon>Pterygota</taxon>
        <taxon>Neoptera</taxon>
        <taxon>Endopterygota</taxon>
        <taxon>Diptera</taxon>
        <taxon>Brachycera</taxon>
        <taxon>Muscomorpha</taxon>
        <taxon>Ephydroidea</taxon>
        <taxon>Drosophilidae</taxon>
        <taxon>Drosophila</taxon>
        <taxon>Sophophora</taxon>
    </lineage>
</organism>
<name>TIPIN_DROME</name>
<proteinExistence type="evidence at transcript level"/>
<feature type="chain" id="PRO_0000305261" description="Protein TIPIN homolog">
    <location>
        <begin position="1"/>
        <end position="307"/>
    </location>
</feature>
<feature type="region of interest" description="Disordered" evidence="2">
    <location>
        <begin position="1"/>
        <end position="50"/>
    </location>
</feature>
<feature type="region of interest" description="Disordered" evidence="2">
    <location>
        <begin position="252"/>
        <end position="279"/>
    </location>
</feature>
<feature type="compositionally biased region" description="Pro residues" evidence="2">
    <location>
        <begin position="262"/>
        <end position="271"/>
    </location>
</feature>
<keyword id="KW-0131">Cell cycle</keyword>
<keyword id="KW-0132">Cell division</keyword>
<keyword id="KW-0963">Cytoplasm</keyword>
<keyword id="KW-0227">DNA damage</keyword>
<keyword id="KW-0498">Mitosis</keyword>
<keyword id="KW-0539">Nucleus</keyword>
<keyword id="KW-1185">Reference proteome</keyword>
<sequence>MASLFGDDGVDDLFNDNIPTDPDQLPSDGEGEKLFADDEDNGVEPGSQDAQIVEPKKRAVRNPRPRLTVETLRGPRGIQTIEDYFKDIKFKGKGYEKTDLDEVLRRLQHWGHRMYPTYTFDDVLNNIERLGKKKPLQVHMARYRLGQLEQMRAHEAEALEEAQDEQQEGAGDEPFDEFDALLGEQIAMSRLAPPSPQQWKMSTASSNSTLATPSFSRGNAVMSTPYSGVNATFDRSGASVAPAFDRNGAPLASMDISDYGQPLPPSQPPTPAAKKLSNEQMARIAENRRLAQERLKAKQQQESGSKS</sequence>